<comment type="function">
    <text evidence="3">Probable neurotoxin.</text>
</comment>
<comment type="subcellular location">
    <subcellularLocation>
        <location evidence="4">Secreted</location>
    </subcellularLocation>
</comment>
<comment type="tissue specificity">
    <text evidence="4">Expressed by the venom duct.</text>
</comment>
<comment type="domain">
    <text evidence="3">The cysteine framework is VI/VII (C-C-CC-C-C).</text>
</comment>
<comment type="domain">
    <text evidence="3">The presence of a 'disulfide through disulfide knot' structurally defines this protein as a knottin.</text>
</comment>
<comment type="similarity">
    <text evidence="3">Belongs to the conotoxin O1 superfamily.</text>
</comment>
<evidence type="ECO:0000255" key="1"/>
<evidence type="ECO:0000303" key="2">
    <source>
    </source>
</evidence>
<evidence type="ECO:0000305" key="3"/>
<evidence type="ECO:0000305" key="4">
    <source>
    </source>
</evidence>
<protein>
    <recommendedName>
        <fullName evidence="3">Conotoxin Cal6.33</fullName>
    </recommendedName>
    <alternativeName>
        <fullName evidence="2">O1_cal6.33</fullName>
    </alternativeName>
</protein>
<feature type="signal peptide" evidence="1">
    <location>
        <begin position="1"/>
        <end position="22"/>
    </location>
</feature>
<feature type="peptide" id="PRO_0000450977" description="Conotoxin Cal6.33">
    <location>
        <begin position="23"/>
        <end position="51"/>
    </location>
</feature>
<feature type="disulfide bond" evidence="3">
    <location>
        <begin position="25"/>
        <end position="39"/>
    </location>
</feature>
<feature type="disulfide bond" evidence="3">
    <location>
        <begin position="32"/>
        <end position="43"/>
    </location>
</feature>
<feature type="disulfide bond" evidence="3">
    <location>
        <begin position="38"/>
        <end position="50"/>
    </location>
</feature>
<keyword id="KW-1015">Disulfide bond</keyword>
<keyword id="KW-0960">Knottin</keyword>
<keyword id="KW-0528">Neurotoxin</keyword>
<keyword id="KW-0964">Secreted</keyword>
<keyword id="KW-0732">Signal</keyword>
<keyword id="KW-0800">Toxin</keyword>
<sequence length="51" mass="5605">MKLTCVVIIAVLILTACQFTTADDCKPKNNLCLWSSECCSGICFPFAQRCT</sequence>
<accession>P0DTZ5</accession>
<proteinExistence type="inferred from homology"/>
<name>O1633_CONCL</name>
<reference key="1">
    <citation type="journal article" date="2019" name="Toxins">
        <title>The diversified O-superfamily in Californiconus californicus presents a conotoxin with antimycobacterial activity.</title>
        <authorList>
            <person name="Bernaldez-Sarabia J."/>
            <person name="Figueroa-Montiel A."/>
            <person name="Duenas S."/>
            <person name="Cervantes-Luevano K."/>
            <person name="Beltran J.A."/>
            <person name="Ortiz E."/>
            <person name="Jimenez S."/>
            <person name="Possani L.D."/>
            <person name="Paniagua-Solis J.F."/>
            <person name="Gonzalez-Canudas J."/>
            <person name="Licea-Navarro A."/>
        </authorList>
    </citation>
    <scope>NUCLEOTIDE SEQUENCE [MRNA]</scope>
    <source>
        <tissue>Venom duct</tissue>
    </source>
</reference>
<organism>
    <name type="scientific">Californiconus californicus</name>
    <name type="common">California cone</name>
    <name type="synonym">Conus californicus</name>
    <dbReference type="NCBI Taxonomy" id="1736779"/>
    <lineage>
        <taxon>Eukaryota</taxon>
        <taxon>Metazoa</taxon>
        <taxon>Spiralia</taxon>
        <taxon>Lophotrochozoa</taxon>
        <taxon>Mollusca</taxon>
        <taxon>Gastropoda</taxon>
        <taxon>Caenogastropoda</taxon>
        <taxon>Neogastropoda</taxon>
        <taxon>Conoidea</taxon>
        <taxon>Conidae</taxon>
        <taxon>Californiconus</taxon>
    </lineage>
</organism>
<dbReference type="GO" id="GO:0005576">
    <property type="term" value="C:extracellular region"/>
    <property type="evidence" value="ECO:0007669"/>
    <property type="project" value="UniProtKB-SubCell"/>
</dbReference>
<dbReference type="GO" id="GO:0090729">
    <property type="term" value="F:toxin activity"/>
    <property type="evidence" value="ECO:0007669"/>
    <property type="project" value="UniProtKB-KW"/>
</dbReference>